<organism>
    <name type="scientific">Rhizobium etli (strain CIAT 652)</name>
    <dbReference type="NCBI Taxonomy" id="491916"/>
    <lineage>
        <taxon>Bacteria</taxon>
        <taxon>Pseudomonadati</taxon>
        <taxon>Pseudomonadota</taxon>
        <taxon>Alphaproteobacteria</taxon>
        <taxon>Hyphomicrobiales</taxon>
        <taxon>Rhizobiaceae</taxon>
        <taxon>Rhizobium/Agrobacterium group</taxon>
        <taxon>Rhizobium</taxon>
    </lineage>
</organism>
<sequence>MLKWALIFFVISIIAGFFGFSGVSAATATIARVLFGIALVIFLIFLVLALMAGQAVL</sequence>
<comment type="subcellular location">
    <subcellularLocation>
        <location evidence="1">Cell membrane</location>
        <topology evidence="1">Multi-pass membrane protein</topology>
    </subcellularLocation>
</comment>
<comment type="similarity">
    <text evidence="1">Belongs to the UPF0391 family.</text>
</comment>
<dbReference type="EMBL" id="CP001074">
    <property type="protein sequence ID" value="ACE92873.1"/>
    <property type="molecule type" value="Genomic_DNA"/>
</dbReference>
<dbReference type="KEGG" id="rec:RHECIAT_CH0003936"/>
<dbReference type="eggNOG" id="COG5487">
    <property type="taxonomic scope" value="Bacteria"/>
</dbReference>
<dbReference type="HOGENOM" id="CLU_187346_1_1_5"/>
<dbReference type="Proteomes" id="UP000008817">
    <property type="component" value="Chromosome"/>
</dbReference>
<dbReference type="GO" id="GO:0005886">
    <property type="term" value="C:plasma membrane"/>
    <property type="evidence" value="ECO:0007669"/>
    <property type="project" value="UniProtKB-SubCell"/>
</dbReference>
<dbReference type="HAMAP" id="MF_01361">
    <property type="entry name" value="UPF0391"/>
    <property type="match status" value="1"/>
</dbReference>
<dbReference type="InterPro" id="IPR009760">
    <property type="entry name" value="DUF1328"/>
</dbReference>
<dbReference type="NCBIfam" id="NF010234">
    <property type="entry name" value="PRK13682.2-5"/>
    <property type="match status" value="1"/>
</dbReference>
<dbReference type="Pfam" id="PF07043">
    <property type="entry name" value="DUF1328"/>
    <property type="match status" value="1"/>
</dbReference>
<dbReference type="PIRSF" id="PIRSF036466">
    <property type="entry name" value="UCP036466"/>
    <property type="match status" value="1"/>
</dbReference>
<name>Y3936_RHIE6</name>
<proteinExistence type="inferred from homology"/>
<gene>
    <name type="ordered locus">RHECIAT_CH0003936</name>
</gene>
<feature type="chain" id="PRO_1000143719" description="UPF0391 membrane protein RHECIAT_CH0003936">
    <location>
        <begin position="1"/>
        <end position="57"/>
    </location>
</feature>
<feature type="transmembrane region" description="Helical" evidence="1">
    <location>
        <begin position="4"/>
        <end position="24"/>
    </location>
</feature>
<feature type="transmembrane region" description="Helical" evidence="1">
    <location>
        <begin position="33"/>
        <end position="53"/>
    </location>
</feature>
<evidence type="ECO:0000255" key="1">
    <source>
        <dbReference type="HAMAP-Rule" id="MF_01361"/>
    </source>
</evidence>
<keyword id="KW-1003">Cell membrane</keyword>
<keyword id="KW-0472">Membrane</keyword>
<keyword id="KW-0812">Transmembrane</keyword>
<keyword id="KW-1133">Transmembrane helix</keyword>
<reference key="1">
    <citation type="journal article" date="2010" name="Appl. Environ. Microbiol.">
        <title>Conserved symbiotic plasmid DNA sequences in the multireplicon pangenomic structure of Rhizobium etli.</title>
        <authorList>
            <person name="Gonzalez V."/>
            <person name="Acosta J.L."/>
            <person name="Santamaria R.I."/>
            <person name="Bustos P."/>
            <person name="Fernandez J.L."/>
            <person name="Hernandez Gonzalez I.L."/>
            <person name="Diaz R."/>
            <person name="Flores M."/>
            <person name="Palacios R."/>
            <person name="Mora J."/>
            <person name="Davila G."/>
        </authorList>
    </citation>
    <scope>NUCLEOTIDE SEQUENCE [LARGE SCALE GENOMIC DNA]</scope>
    <source>
        <strain>CIAT 652</strain>
    </source>
</reference>
<protein>
    <recommendedName>
        <fullName evidence="1">UPF0391 membrane protein RHECIAT_CH0003936</fullName>
    </recommendedName>
</protein>
<accession>B3Q0T2</accession>